<comment type="catalytic activity">
    <reaction evidence="1">
        <text>(6R)-10-formyltetrahydrofolate + 5-amino-1-(5-phospho-beta-D-ribosyl)imidazole-4-carboxamide = 5-formamido-1-(5-phospho-D-ribosyl)imidazole-4-carboxamide + (6S)-5,6,7,8-tetrahydrofolate</text>
        <dbReference type="Rhea" id="RHEA:22192"/>
        <dbReference type="ChEBI" id="CHEBI:57453"/>
        <dbReference type="ChEBI" id="CHEBI:58467"/>
        <dbReference type="ChEBI" id="CHEBI:58475"/>
        <dbReference type="ChEBI" id="CHEBI:195366"/>
        <dbReference type="EC" id="2.1.2.3"/>
    </reaction>
</comment>
<comment type="catalytic activity">
    <reaction evidence="1">
        <text>IMP + H2O = 5-formamido-1-(5-phospho-D-ribosyl)imidazole-4-carboxamide</text>
        <dbReference type="Rhea" id="RHEA:18445"/>
        <dbReference type="ChEBI" id="CHEBI:15377"/>
        <dbReference type="ChEBI" id="CHEBI:58053"/>
        <dbReference type="ChEBI" id="CHEBI:58467"/>
        <dbReference type="EC" id="3.5.4.10"/>
    </reaction>
</comment>
<comment type="pathway">
    <text evidence="1">Purine metabolism; IMP biosynthesis via de novo pathway; 5-formamido-1-(5-phospho-D-ribosyl)imidazole-4-carboxamide from 5-amino-1-(5-phospho-D-ribosyl)imidazole-4-carboxamide (10-formyl THF route): step 1/1.</text>
</comment>
<comment type="pathway">
    <text evidence="1">Purine metabolism; IMP biosynthesis via de novo pathway; IMP from 5-formamido-1-(5-phospho-D-ribosyl)imidazole-4-carboxamide: step 1/1.</text>
</comment>
<comment type="domain">
    <text evidence="1">The IMP cyclohydrolase activity resides in the N-terminal region.</text>
</comment>
<comment type="similarity">
    <text evidence="1">Belongs to the PurH family.</text>
</comment>
<proteinExistence type="inferred from homology"/>
<sequence>MIKQALISVSDKTGIVDFAKALSALGVKLLSTGGTAKLLADAGLPVTEVADYTGFPEMLDGRVKTLHPKVHGGILARRDLPEHMQALEAHGIPTIDLLVVNLYPFVQTIAKDDCTLADAIENIDIGGPTMLRSAAKNHRDVTVVVDPADYAVVLDEMKANGNTLGYKTNFRLATKVFAHTAQYDGAITNYLTSLGDDLQHGSRSAYPATLNLAFDKVQDLRYGENPHQSAAFYRDVATPAGALANYRQLQGKELSYNNIADSDAAWECVKTFDAPACVIIKHANPCGVAVGADAGEAYAKAFQTDPTSAFGGIIAFNREVDEAAAQAVAKQFVEVLIAPSFSDAAKQVFAAKQNVRLLEIALGEGHNAFDLKRVGGGLLVQSLDSKNVQPRELRVVTKRHPTPKEMDDLLFAWRVAKYVKSNAIVFCGNGMTLGVGAGQMSRVDSARIASIKAQNAGLTLAGSAVASDAFFPFRDGLDVVVAAGATCVIQPGGSVRDDEVIAAADEHNIAMVVTGVRHFRH</sequence>
<keyword id="KW-0378">Hydrolase</keyword>
<keyword id="KW-0511">Multifunctional enzyme</keyword>
<keyword id="KW-0658">Purine biosynthesis</keyword>
<keyword id="KW-0808">Transferase</keyword>
<organism>
    <name type="scientific">Burkholderia pseudomallei (strain 1106a)</name>
    <dbReference type="NCBI Taxonomy" id="357348"/>
    <lineage>
        <taxon>Bacteria</taxon>
        <taxon>Pseudomonadati</taxon>
        <taxon>Pseudomonadota</taxon>
        <taxon>Betaproteobacteria</taxon>
        <taxon>Burkholderiales</taxon>
        <taxon>Burkholderiaceae</taxon>
        <taxon>Burkholderia</taxon>
        <taxon>pseudomallei group</taxon>
    </lineage>
</organism>
<feature type="chain" id="PRO_1000018858" description="Bifunctional purine biosynthesis protein PurH">
    <location>
        <begin position="1"/>
        <end position="521"/>
    </location>
</feature>
<feature type="domain" description="MGS-like" evidence="2">
    <location>
        <begin position="1"/>
        <end position="145"/>
    </location>
</feature>
<name>PUR9_BURP0</name>
<evidence type="ECO:0000255" key="1">
    <source>
        <dbReference type="HAMAP-Rule" id="MF_00139"/>
    </source>
</evidence>
<evidence type="ECO:0000255" key="2">
    <source>
        <dbReference type="PROSITE-ProRule" id="PRU01202"/>
    </source>
</evidence>
<dbReference type="EC" id="2.1.2.3" evidence="1"/>
<dbReference type="EC" id="3.5.4.10" evidence="1"/>
<dbReference type="EMBL" id="CP000572">
    <property type="protein sequence ID" value="ABN89209.1"/>
    <property type="molecule type" value="Genomic_DNA"/>
</dbReference>
<dbReference type="RefSeq" id="WP_004194285.1">
    <property type="nucleotide sequence ID" value="NC_009076.1"/>
</dbReference>
<dbReference type="SMR" id="A3NZ64"/>
<dbReference type="GeneID" id="92980050"/>
<dbReference type="KEGG" id="bpl:BURPS1106A_3398"/>
<dbReference type="HOGENOM" id="CLU_016316_5_2_4"/>
<dbReference type="UniPathway" id="UPA00074">
    <property type="reaction ID" value="UER00133"/>
</dbReference>
<dbReference type="UniPathway" id="UPA00074">
    <property type="reaction ID" value="UER00135"/>
</dbReference>
<dbReference type="Proteomes" id="UP000006738">
    <property type="component" value="Chromosome I"/>
</dbReference>
<dbReference type="GO" id="GO:0005829">
    <property type="term" value="C:cytosol"/>
    <property type="evidence" value="ECO:0007669"/>
    <property type="project" value="TreeGrafter"/>
</dbReference>
<dbReference type="GO" id="GO:0003937">
    <property type="term" value="F:IMP cyclohydrolase activity"/>
    <property type="evidence" value="ECO:0007669"/>
    <property type="project" value="UniProtKB-UniRule"/>
</dbReference>
<dbReference type="GO" id="GO:0004643">
    <property type="term" value="F:phosphoribosylaminoimidazolecarboxamide formyltransferase activity"/>
    <property type="evidence" value="ECO:0007669"/>
    <property type="project" value="UniProtKB-UniRule"/>
</dbReference>
<dbReference type="GO" id="GO:0006189">
    <property type="term" value="P:'de novo' IMP biosynthetic process"/>
    <property type="evidence" value="ECO:0007669"/>
    <property type="project" value="UniProtKB-UniRule"/>
</dbReference>
<dbReference type="CDD" id="cd01421">
    <property type="entry name" value="IMPCH"/>
    <property type="match status" value="1"/>
</dbReference>
<dbReference type="FunFam" id="3.40.140.20:FF:000001">
    <property type="entry name" value="Bifunctional purine biosynthesis protein PurH"/>
    <property type="match status" value="1"/>
</dbReference>
<dbReference type="FunFam" id="3.40.140.20:FF:000002">
    <property type="entry name" value="Bifunctional purine biosynthesis protein PurH"/>
    <property type="match status" value="1"/>
</dbReference>
<dbReference type="FunFam" id="3.40.50.1380:FF:000001">
    <property type="entry name" value="Bifunctional purine biosynthesis protein PurH"/>
    <property type="match status" value="1"/>
</dbReference>
<dbReference type="Gene3D" id="3.40.140.20">
    <property type="match status" value="2"/>
</dbReference>
<dbReference type="Gene3D" id="3.40.50.1380">
    <property type="entry name" value="Methylglyoxal synthase-like domain"/>
    <property type="match status" value="1"/>
</dbReference>
<dbReference type="HAMAP" id="MF_00139">
    <property type="entry name" value="PurH"/>
    <property type="match status" value="1"/>
</dbReference>
<dbReference type="InterPro" id="IPR024051">
    <property type="entry name" value="AICAR_Tfase_dup_dom_sf"/>
</dbReference>
<dbReference type="InterPro" id="IPR016193">
    <property type="entry name" value="Cytidine_deaminase-like"/>
</dbReference>
<dbReference type="InterPro" id="IPR011607">
    <property type="entry name" value="MGS-like_dom"/>
</dbReference>
<dbReference type="InterPro" id="IPR036914">
    <property type="entry name" value="MGS-like_dom_sf"/>
</dbReference>
<dbReference type="InterPro" id="IPR002695">
    <property type="entry name" value="PurH-like"/>
</dbReference>
<dbReference type="NCBIfam" id="NF002049">
    <property type="entry name" value="PRK00881.1"/>
    <property type="match status" value="1"/>
</dbReference>
<dbReference type="NCBIfam" id="TIGR00355">
    <property type="entry name" value="purH"/>
    <property type="match status" value="1"/>
</dbReference>
<dbReference type="PANTHER" id="PTHR11692:SF0">
    <property type="entry name" value="BIFUNCTIONAL PURINE BIOSYNTHESIS PROTEIN ATIC"/>
    <property type="match status" value="1"/>
</dbReference>
<dbReference type="PANTHER" id="PTHR11692">
    <property type="entry name" value="BIFUNCTIONAL PURINE BIOSYNTHESIS PROTEIN PURH"/>
    <property type="match status" value="1"/>
</dbReference>
<dbReference type="Pfam" id="PF01808">
    <property type="entry name" value="AICARFT_IMPCHas"/>
    <property type="match status" value="1"/>
</dbReference>
<dbReference type="Pfam" id="PF02142">
    <property type="entry name" value="MGS"/>
    <property type="match status" value="1"/>
</dbReference>
<dbReference type="PIRSF" id="PIRSF000414">
    <property type="entry name" value="AICARFT_IMPCHas"/>
    <property type="match status" value="1"/>
</dbReference>
<dbReference type="SMART" id="SM00798">
    <property type="entry name" value="AICARFT_IMPCHas"/>
    <property type="match status" value="1"/>
</dbReference>
<dbReference type="SMART" id="SM00851">
    <property type="entry name" value="MGS"/>
    <property type="match status" value="1"/>
</dbReference>
<dbReference type="SUPFAM" id="SSF53927">
    <property type="entry name" value="Cytidine deaminase-like"/>
    <property type="match status" value="1"/>
</dbReference>
<dbReference type="SUPFAM" id="SSF52335">
    <property type="entry name" value="Methylglyoxal synthase-like"/>
    <property type="match status" value="1"/>
</dbReference>
<dbReference type="PROSITE" id="PS51855">
    <property type="entry name" value="MGS"/>
    <property type="match status" value="1"/>
</dbReference>
<accession>A3NZ64</accession>
<reference key="1">
    <citation type="journal article" date="2010" name="Genome Biol. Evol.">
        <title>Continuing evolution of Burkholderia mallei through genome reduction and large-scale rearrangements.</title>
        <authorList>
            <person name="Losada L."/>
            <person name="Ronning C.M."/>
            <person name="DeShazer D."/>
            <person name="Woods D."/>
            <person name="Fedorova N."/>
            <person name="Kim H.S."/>
            <person name="Shabalina S.A."/>
            <person name="Pearson T.R."/>
            <person name="Brinkac L."/>
            <person name="Tan P."/>
            <person name="Nandi T."/>
            <person name="Crabtree J."/>
            <person name="Badger J."/>
            <person name="Beckstrom-Sternberg S."/>
            <person name="Saqib M."/>
            <person name="Schutzer S.E."/>
            <person name="Keim P."/>
            <person name="Nierman W.C."/>
        </authorList>
    </citation>
    <scope>NUCLEOTIDE SEQUENCE [LARGE SCALE GENOMIC DNA]</scope>
    <source>
        <strain>1106a</strain>
    </source>
</reference>
<protein>
    <recommendedName>
        <fullName evidence="1">Bifunctional purine biosynthesis protein PurH</fullName>
    </recommendedName>
    <domain>
        <recommendedName>
            <fullName evidence="1">Phosphoribosylaminoimidazolecarboxamide formyltransferase</fullName>
            <ecNumber evidence="1">2.1.2.3</ecNumber>
        </recommendedName>
        <alternativeName>
            <fullName evidence="1">AICAR transformylase</fullName>
        </alternativeName>
    </domain>
    <domain>
        <recommendedName>
            <fullName evidence="1">IMP cyclohydrolase</fullName>
            <ecNumber evidence="1">3.5.4.10</ecNumber>
        </recommendedName>
        <alternativeName>
            <fullName evidence="1">ATIC</fullName>
        </alternativeName>
        <alternativeName>
            <fullName evidence="1">IMP synthase</fullName>
        </alternativeName>
        <alternativeName>
            <fullName evidence="1">Inosinicase</fullName>
        </alternativeName>
    </domain>
</protein>
<gene>
    <name evidence="1" type="primary">purH</name>
    <name type="ordered locus">BURPS1106A_3398</name>
</gene>